<comment type="function">
    <text evidence="1">Involved in the biosynthesis of lipid A, a phosphorylated glycolipid that anchors the lipopolysaccharide to the outer membrane of the cell.</text>
</comment>
<comment type="catalytic activity">
    <reaction evidence="1">
        <text>a (3R)-hydroxyacyl-[ACP] + UDP-N-acetyl-alpha-D-glucosamine = a UDP-3-O-[(3R)-3-hydroxyacyl]-N-acetyl-alpha-D-glucosamine + holo-[ACP]</text>
        <dbReference type="Rhea" id="RHEA:67812"/>
        <dbReference type="Rhea" id="RHEA-COMP:9685"/>
        <dbReference type="Rhea" id="RHEA-COMP:9945"/>
        <dbReference type="ChEBI" id="CHEBI:57705"/>
        <dbReference type="ChEBI" id="CHEBI:64479"/>
        <dbReference type="ChEBI" id="CHEBI:78827"/>
        <dbReference type="ChEBI" id="CHEBI:173225"/>
        <dbReference type="EC" id="2.3.1.129"/>
    </reaction>
</comment>
<comment type="pathway">
    <text evidence="1">Glycolipid biosynthesis; lipid IV(A) biosynthesis; lipid IV(A) from (3R)-3-hydroxytetradecanoyl-[acyl-carrier-protein] and UDP-N-acetyl-alpha-D-glucosamine: step 1/6.</text>
</comment>
<comment type="subunit">
    <text evidence="1">Homotrimer.</text>
</comment>
<comment type="subcellular location">
    <subcellularLocation>
        <location evidence="1">Cytoplasm</location>
    </subcellularLocation>
</comment>
<comment type="similarity">
    <text evidence="1">Belongs to the transferase hexapeptide repeat family. LpxA subfamily.</text>
</comment>
<name>LPXA_VIBC1</name>
<accession>A7MY03</accession>
<evidence type="ECO:0000255" key="1">
    <source>
        <dbReference type="HAMAP-Rule" id="MF_00387"/>
    </source>
</evidence>
<proteinExistence type="inferred from homology"/>
<reference key="1">
    <citation type="submission" date="2007-08" db="EMBL/GenBank/DDBJ databases">
        <authorList>
            <consortium name="The Vibrio harveyi Genome Sequencing Project"/>
            <person name="Bassler B."/>
            <person name="Clifton S.W."/>
            <person name="Fulton L."/>
            <person name="Delehaunty K."/>
            <person name="Fronick C."/>
            <person name="Harrison M."/>
            <person name="Markivic C."/>
            <person name="Fulton R."/>
            <person name="Tin-Wollam A.-M."/>
            <person name="Shah N."/>
            <person name="Pepin K."/>
            <person name="Nash W."/>
            <person name="Thiruvilangam P."/>
            <person name="Bhonagiri V."/>
            <person name="Waters C."/>
            <person name="Tu K.C."/>
            <person name="Irgon J."/>
            <person name="Wilson R.K."/>
        </authorList>
    </citation>
    <scope>NUCLEOTIDE SEQUENCE [LARGE SCALE GENOMIC DNA]</scope>
    <source>
        <strain>ATCC BAA-1116 / BB120</strain>
    </source>
</reference>
<organism>
    <name type="scientific">Vibrio campbellii (strain ATCC BAA-1116)</name>
    <dbReference type="NCBI Taxonomy" id="2902295"/>
    <lineage>
        <taxon>Bacteria</taxon>
        <taxon>Pseudomonadati</taxon>
        <taxon>Pseudomonadota</taxon>
        <taxon>Gammaproteobacteria</taxon>
        <taxon>Vibrionales</taxon>
        <taxon>Vibrionaceae</taxon>
        <taxon>Vibrio</taxon>
    </lineage>
</organism>
<feature type="chain" id="PRO_1000013183" description="Acyl-[acyl-carrier-protein]--UDP-N-acetylglucosamine O-acyltransferase">
    <location>
        <begin position="1"/>
        <end position="262"/>
    </location>
</feature>
<sequence>MIHETAKIHPAAVVEEGAKIGANVTVGPFTYITSTVEIGEGTEVMSHVVIKGHTKIGKDNRIFPHAVIGEENQDKKYGGEDTTVVIGDRNVIREAVQVHRGTVQDKATTVIGDDNLLCVNAHIAHDVVVGNHTHIGNNAILGGHVTVDDHAGVMALSAIHPFCTVGAYAYVGGCSAVVQDVPAYVLAQGNHATPFGLNLVGLKRNGFEKPEIRALQKAYKEIYRSGKTLEEVKPILAEMAQEWPAVKRFSDILETTERGIIR</sequence>
<gene>
    <name evidence="1" type="primary">lpxA</name>
    <name type="ordered locus">VIBHAR_03225</name>
</gene>
<dbReference type="EC" id="2.3.1.129" evidence="1"/>
<dbReference type="EMBL" id="CP000789">
    <property type="protein sequence ID" value="ABU72174.1"/>
    <property type="molecule type" value="Genomic_DNA"/>
</dbReference>
<dbReference type="RefSeq" id="WP_005430231.1">
    <property type="nucleotide sequence ID" value="NC_022269.1"/>
</dbReference>
<dbReference type="SMR" id="A7MY03"/>
<dbReference type="GeneID" id="67376534"/>
<dbReference type="KEGG" id="vha:VIBHAR_03225"/>
<dbReference type="PATRIC" id="fig|338187.25.peg.2965"/>
<dbReference type="UniPathway" id="UPA00359">
    <property type="reaction ID" value="UER00477"/>
</dbReference>
<dbReference type="Proteomes" id="UP000008152">
    <property type="component" value="Chromosome I"/>
</dbReference>
<dbReference type="GO" id="GO:0005737">
    <property type="term" value="C:cytoplasm"/>
    <property type="evidence" value="ECO:0007669"/>
    <property type="project" value="UniProtKB-SubCell"/>
</dbReference>
<dbReference type="GO" id="GO:0016020">
    <property type="term" value="C:membrane"/>
    <property type="evidence" value="ECO:0007669"/>
    <property type="project" value="GOC"/>
</dbReference>
<dbReference type="GO" id="GO:0008780">
    <property type="term" value="F:acyl-[acyl-carrier-protein]-UDP-N-acetylglucosamine O-acyltransferase activity"/>
    <property type="evidence" value="ECO:0007669"/>
    <property type="project" value="UniProtKB-UniRule"/>
</dbReference>
<dbReference type="GO" id="GO:0009245">
    <property type="term" value="P:lipid A biosynthetic process"/>
    <property type="evidence" value="ECO:0007669"/>
    <property type="project" value="UniProtKB-UniRule"/>
</dbReference>
<dbReference type="CDD" id="cd03351">
    <property type="entry name" value="LbH_UDP-GlcNAc_AT"/>
    <property type="match status" value="1"/>
</dbReference>
<dbReference type="Gene3D" id="2.160.10.10">
    <property type="entry name" value="Hexapeptide repeat proteins"/>
    <property type="match status" value="1"/>
</dbReference>
<dbReference type="Gene3D" id="1.20.1180.10">
    <property type="entry name" value="Udp N-acetylglucosamine O-acyltransferase, C-terminal domain"/>
    <property type="match status" value="1"/>
</dbReference>
<dbReference type="HAMAP" id="MF_00387">
    <property type="entry name" value="LpxA"/>
    <property type="match status" value="1"/>
</dbReference>
<dbReference type="InterPro" id="IPR029098">
    <property type="entry name" value="Acetyltransf_C"/>
</dbReference>
<dbReference type="InterPro" id="IPR037157">
    <property type="entry name" value="Acetyltransf_C_sf"/>
</dbReference>
<dbReference type="InterPro" id="IPR001451">
    <property type="entry name" value="Hexapep"/>
</dbReference>
<dbReference type="InterPro" id="IPR010137">
    <property type="entry name" value="Lipid_A_LpxA"/>
</dbReference>
<dbReference type="InterPro" id="IPR011004">
    <property type="entry name" value="Trimer_LpxA-like_sf"/>
</dbReference>
<dbReference type="NCBIfam" id="TIGR01852">
    <property type="entry name" value="lipid_A_lpxA"/>
    <property type="match status" value="1"/>
</dbReference>
<dbReference type="NCBIfam" id="NF003657">
    <property type="entry name" value="PRK05289.1"/>
    <property type="match status" value="1"/>
</dbReference>
<dbReference type="PANTHER" id="PTHR43480">
    <property type="entry name" value="ACYL-[ACYL-CARRIER-PROTEIN]--UDP-N-ACETYLGLUCOSAMINE O-ACYLTRANSFERASE"/>
    <property type="match status" value="1"/>
</dbReference>
<dbReference type="PANTHER" id="PTHR43480:SF1">
    <property type="entry name" value="ACYL-[ACYL-CARRIER-PROTEIN]--UDP-N-ACETYLGLUCOSAMINE O-ACYLTRANSFERASE, MITOCHONDRIAL-RELATED"/>
    <property type="match status" value="1"/>
</dbReference>
<dbReference type="Pfam" id="PF13720">
    <property type="entry name" value="Acetyltransf_11"/>
    <property type="match status" value="1"/>
</dbReference>
<dbReference type="Pfam" id="PF00132">
    <property type="entry name" value="Hexapep"/>
    <property type="match status" value="2"/>
</dbReference>
<dbReference type="PIRSF" id="PIRSF000456">
    <property type="entry name" value="UDP-GlcNAc_acltr"/>
    <property type="match status" value="1"/>
</dbReference>
<dbReference type="SUPFAM" id="SSF51161">
    <property type="entry name" value="Trimeric LpxA-like enzymes"/>
    <property type="match status" value="1"/>
</dbReference>
<protein>
    <recommendedName>
        <fullName evidence="1">Acyl-[acyl-carrier-protein]--UDP-N-acetylglucosamine O-acyltransferase</fullName>
        <shortName evidence="1">UDP-N-acetylglucosamine acyltransferase</shortName>
        <ecNumber evidence="1">2.3.1.129</ecNumber>
    </recommendedName>
</protein>
<keyword id="KW-0012">Acyltransferase</keyword>
<keyword id="KW-0963">Cytoplasm</keyword>
<keyword id="KW-0441">Lipid A biosynthesis</keyword>
<keyword id="KW-0444">Lipid biosynthesis</keyword>
<keyword id="KW-0443">Lipid metabolism</keyword>
<keyword id="KW-0677">Repeat</keyword>
<keyword id="KW-0808">Transferase</keyword>